<accession>C3LP93</accession>
<reference key="1">
    <citation type="journal article" date="2008" name="PLoS ONE">
        <title>A recalibrated molecular clock and independent origins for the cholera pandemic clones.</title>
        <authorList>
            <person name="Feng L."/>
            <person name="Reeves P.R."/>
            <person name="Lan R."/>
            <person name="Ren Y."/>
            <person name="Gao C."/>
            <person name="Zhou Z."/>
            <person name="Ren Y."/>
            <person name="Cheng J."/>
            <person name="Wang W."/>
            <person name="Wang J."/>
            <person name="Qian W."/>
            <person name="Li D."/>
            <person name="Wang L."/>
        </authorList>
    </citation>
    <scope>NUCLEOTIDE SEQUENCE [LARGE SCALE GENOMIC DNA]</scope>
    <source>
        <strain>M66-2</strain>
    </source>
</reference>
<name>SYGB_VIBCM</name>
<feature type="chain" id="PRO_1000197225" description="Glycine--tRNA ligase beta subunit">
    <location>
        <begin position="1"/>
        <end position="688"/>
    </location>
</feature>
<dbReference type="EC" id="6.1.1.14" evidence="1"/>
<dbReference type="EMBL" id="CP001233">
    <property type="protein sequence ID" value="ACP04357.1"/>
    <property type="molecule type" value="Genomic_DNA"/>
</dbReference>
<dbReference type="RefSeq" id="WP_001040221.1">
    <property type="nucleotide sequence ID" value="NC_012578.1"/>
</dbReference>
<dbReference type="SMR" id="C3LP93"/>
<dbReference type="KEGG" id="vcm:VCM66_0020"/>
<dbReference type="HOGENOM" id="CLU_007220_2_2_6"/>
<dbReference type="Proteomes" id="UP000001217">
    <property type="component" value="Chromosome I"/>
</dbReference>
<dbReference type="GO" id="GO:0005829">
    <property type="term" value="C:cytosol"/>
    <property type="evidence" value="ECO:0007669"/>
    <property type="project" value="TreeGrafter"/>
</dbReference>
<dbReference type="GO" id="GO:0004814">
    <property type="term" value="F:arginine-tRNA ligase activity"/>
    <property type="evidence" value="ECO:0007669"/>
    <property type="project" value="InterPro"/>
</dbReference>
<dbReference type="GO" id="GO:0005524">
    <property type="term" value="F:ATP binding"/>
    <property type="evidence" value="ECO:0007669"/>
    <property type="project" value="UniProtKB-UniRule"/>
</dbReference>
<dbReference type="GO" id="GO:0004820">
    <property type="term" value="F:glycine-tRNA ligase activity"/>
    <property type="evidence" value="ECO:0007669"/>
    <property type="project" value="UniProtKB-UniRule"/>
</dbReference>
<dbReference type="GO" id="GO:0006420">
    <property type="term" value="P:arginyl-tRNA aminoacylation"/>
    <property type="evidence" value="ECO:0007669"/>
    <property type="project" value="InterPro"/>
</dbReference>
<dbReference type="GO" id="GO:0006426">
    <property type="term" value="P:glycyl-tRNA aminoacylation"/>
    <property type="evidence" value="ECO:0007669"/>
    <property type="project" value="UniProtKB-UniRule"/>
</dbReference>
<dbReference type="HAMAP" id="MF_00255">
    <property type="entry name" value="Gly_tRNA_synth_beta"/>
    <property type="match status" value="1"/>
</dbReference>
<dbReference type="InterPro" id="IPR008909">
    <property type="entry name" value="DALR_anticod-bd"/>
</dbReference>
<dbReference type="InterPro" id="IPR015944">
    <property type="entry name" value="Gly-tRNA-synth_bsu"/>
</dbReference>
<dbReference type="InterPro" id="IPR006194">
    <property type="entry name" value="Gly-tRNA-synth_heterodimer"/>
</dbReference>
<dbReference type="NCBIfam" id="TIGR00211">
    <property type="entry name" value="glyS"/>
    <property type="match status" value="1"/>
</dbReference>
<dbReference type="PANTHER" id="PTHR30075:SF2">
    <property type="entry name" value="GLYCINE--TRNA LIGASE, CHLOROPLASTIC_MITOCHONDRIAL 2"/>
    <property type="match status" value="1"/>
</dbReference>
<dbReference type="PANTHER" id="PTHR30075">
    <property type="entry name" value="GLYCYL-TRNA SYNTHETASE"/>
    <property type="match status" value="1"/>
</dbReference>
<dbReference type="Pfam" id="PF05746">
    <property type="entry name" value="DALR_1"/>
    <property type="match status" value="1"/>
</dbReference>
<dbReference type="Pfam" id="PF02092">
    <property type="entry name" value="tRNA_synt_2f"/>
    <property type="match status" value="1"/>
</dbReference>
<dbReference type="PRINTS" id="PR01045">
    <property type="entry name" value="TRNASYNTHGB"/>
</dbReference>
<dbReference type="SUPFAM" id="SSF109604">
    <property type="entry name" value="HD-domain/PDEase-like"/>
    <property type="match status" value="1"/>
</dbReference>
<dbReference type="PROSITE" id="PS50861">
    <property type="entry name" value="AA_TRNA_LIGASE_II_GLYAB"/>
    <property type="match status" value="1"/>
</dbReference>
<organism>
    <name type="scientific">Vibrio cholerae serotype O1 (strain M66-2)</name>
    <dbReference type="NCBI Taxonomy" id="579112"/>
    <lineage>
        <taxon>Bacteria</taxon>
        <taxon>Pseudomonadati</taxon>
        <taxon>Pseudomonadota</taxon>
        <taxon>Gammaproteobacteria</taxon>
        <taxon>Vibrionales</taxon>
        <taxon>Vibrionaceae</taxon>
        <taxon>Vibrio</taxon>
    </lineage>
</organism>
<sequence length="688" mass="75925">MAKEFLIELGTEELPPKQLRTLAEAFAANFAAELATADIAHEGVTWFATPRRLALKVANLAESQPDRVVEKRGPAVNVAFDADGKPTKAAEGWARGNGITVEQAERLVTDKGEWLLFKEQVQGQQTASVVVEMAAKALANLPIAKPMRWGDKETQFIRPVKTLTILFGSELIQGEILGVASARTLRGHRFMGEAEFTIESAEQYPAILEERGKVIADYATRKAMIIEGSQQAAQQLGGIADLEDALVEEVTSLVEWPVVMTAKFEEKFLKVPAEALVYTMKGDQKYFPVYDASKKLLPNFIFVSNIESKEPRHIVEGNEKVVRPRLADAEFFFNTDRKRPLVDRLPLLENAIFQQQLGTIKDKTDRITELAGYIAEQIGADVEKSKRAGLLAKCDLMTSMVFEFTDTQGVMGMHYARHDGEAEEVAVALNEQYMPRFAGDELPSRGVSAAVAMADKLDTIVGIFGIGQAPKGSDPFALRRASLGVLRILVEYGYQLDLVDLIAKAKSLFGDRLTNANVEQEVIEFMLGRFPTWYQDAGFSIDIIQAVLARNPTKPADFDQRVKAVSHFRALEEAEALAAANKRVGNILAKYDGELGEEIDLALLQEDAEKALAEAVEIMAEALEPAFATGNYQEALSKLAGLRAPVDAFFDNVMVMADDEALKKNRLTLLNKLRNLFLQIADISLLQK</sequence>
<protein>
    <recommendedName>
        <fullName evidence="1">Glycine--tRNA ligase beta subunit</fullName>
        <ecNumber evidence="1">6.1.1.14</ecNumber>
    </recommendedName>
    <alternativeName>
        <fullName evidence="1">Glycyl-tRNA synthetase beta subunit</fullName>
        <shortName evidence="1">GlyRS</shortName>
    </alternativeName>
</protein>
<comment type="catalytic activity">
    <reaction evidence="1">
        <text>tRNA(Gly) + glycine + ATP = glycyl-tRNA(Gly) + AMP + diphosphate</text>
        <dbReference type="Rhea" id="RHEA:16013"/>
        <dbReference type="Rhea" id="RHEA-COMP:9664"/>
        <dbReference type="Rhea" id="RHEA-COMP:9683"/>
        <dbReference type="ChEBI" id="CHEBI:30616"/>
        <dbReference type="ChEBI" id="CHEBI:33019"/>
        <dbReference type="ChEBI" id="CHEBI:57305"/>
        <dbReference type="ChEBI" id="CHEBI:78442"/>
        <dbReference type="ChEBI" id="CHEBI:78522"/>
        <dbReference type="ChEBI" id="CHEBI:456215"/>
        <dbReference type="EC" id="6.1.1.14"/>
    </reaction>
</comment>
<comment type="subunit">
    <text evidence="1">Tetramer of two alpha and two beta subunits.</text>
</comment>
<comment type="subcellular location">
    <subcellularLocation>
        <location evidence="1">Cytoplasm</location>
    </subcellularLocation>
</comment>
<comment type="similarity">
    <text evidence="1">Belongs to the class-II aminoacyl-tRNA synthetase family.</text>
</comment>
<evidence type="ECO:0000255" key="1">
    <source>
        <dbReference type="HAMAP-Rule" id="MF_00255"/>
    </source>
</evidence>
<proteinExistence type="inferred from homology"/>
<gene>
    <name evidence="1" type="primary">glyS</name>
    <name type="ordered locus">VCM66_0020</name>
</gene>
<keyword id="KW-0030">Aminoacyl-tRNA synthetase</keyword>
<keyword id="KW-0067">ATP-binding</keyword>
<keyword id="KW-0963">Cytoplasm</keyword>
<keyword id="KW-0436">Ligase</keyword>
<keyword id="KW-0547">Nucleotide-binding</keyword>
<keyword id="KW-0648">Protein biosynthesis</keyword>